<name>MINE_DEIDV</name>
<comment type="function">
    <text evidence="1">Prevents the cell division inhibition by proteins MinC and MinD at internal division sites while permitting inhibition at polar sites. This ensures cell division at the proper site by restricting the formation of a division septum at the midpoint of the long axis of the cell.</text>
</comment>
<comment type="similarity">
    <text evidence="1">Belongs to the MinE family.</text>
</comment>
<reference key="1">
    <citation type="journal article" date="2009" name="PLoS Genet.">
        <title>Alliance of proteomics and genomics to unravel the specificities of Sahara bacterium Deinococcus deserti.</title>
        <authorList>
            <person name="de Groot A."/>
            <person name="Dulermo R."/>
            <person name="Ortet P."/>
            <person name="Blanchard L."/>
            <person name="Guerin P."/>
            <person name="Fernandez B."/>
            <person name="Vacherie B."/>
            <person name="Dossat C."/>
            <person name="Jolivet E."/>
            <person name="Siguier P."/>
            <person name="Chandler M."/>
            <person name="Barakat M."/>
            <person name="Dedieu A."/>
            <person name="Barbe V."/>
            <person name="Heulin T."/>
            <person name="Sommer S."/>
            <person name="Achouak W."/>
            <person name="Armengaud J."/>
        </authorList>
    </citation>
    <scope>NUCLEOTIDE SEQUENCE [LARGE SCALE GENOMIC DNA]</scope>
    <source>
        <strain>DSM 17065 / CIP 109153 / LMG 22923 / VCD115</strain>
    </source>
</reference>
<keyword id="KW-0131">Cell cycle</keyword>
<keyword id="KW-0132">Cell division</keyword>
<keyword id="KW-1185">Reference proteome</keyword>
<accession>C1CYV3</accession>
<gene>
    <name evidence="1" type="primary">minE</name>
    <name type="ordered locus">Deide_21090</name>
</gene>
<protein>
    <recommendedName>
        <fullName evidence="1">Cell division topological specificity factor</fullName>
    </recommendedName>
</protein>
<feature type="chain" id="PRO_1000204678" description="Cell division topological specificity factor">
    <location>
        <begin position="1"/>
        <end position="83"/>
    </location>
</feature>
<organism>
    <name type="scientific">Deinococcus deserti (strain DSM 17065 / CIP 109153 / LMG 22923 / VCD115)</name>
    <dbReference type="NCBI Taxonomy" id="546414"/>
    <lineage>
        <taxon>Bacteria</taxon>
        <taxon>Thermotogati</taxon>
        <taxon>Deinococcota</taxon>
        <taxon>Deinococci</taxon>
        <taxon>Deinococcales</taxon>
        <taxon>Deinococcaceae</taxon>
        <taxon>Deinococcus</taxon>
    </lineage>
</organism>
<proteinExistence type="inferred from homology"/>
<dbReference type="EMBL" id="CP001114">
    <property type="protein sequence ID" value="ACO47133.1"/>
    <property type="molecule type" value="Genomic_DNA"/>
</dbReference>
<dbReference type="RefSeq" id="WP_012694254.1">
    <property type="nucleotide sequence ID" value="NC_012526.1"/>
</dbReference>
<dbReference type="SMR" id="C1CYV3"/>
<dbReference type="STRING" id="546414.Deide_21090"/>
<dbReference type="PaxDb" id="546414-Deide_21090"/>
<dbReference type="KEGG" id="ddr:Deide_21090"/>
<dbReference type="eggNOG" id="COG0851">
    <property type="taxonomic scope" value="Bacteria"/>
</dbReference>
<dbReference type="HOGENOM" id="CLU_137929_1_2_0"/>
<dbReference type="OrthoDB" id="71205at2"/>
<dbReference type="Proteomes" id="UP000002208">
    <property type="component" value="Chromosome"/>
</dbReference>
<dbReference type="GO" id="GO:0051301">
    <property type="term" value="P:cell division"/>
    <property type="evidence" value="ECO:0007669"/>
    <property type="project" value="UniProtKB-KW"/>
</dbReference>
<dbReference type="GO" id="GO:0032955">
    <property type="term" value="P:regulation of division septum assembly"/>
    <property type="evidence" value="ECO:0007669"/>
    <property type="project" value="InterPro"/>
</dbReference>
<dbReference type="Gene3D" id="3.30.1070.10">
    <property type="entry name" value="Cell division topological specificity factor MinE"/>
    <property type="match status" value="1"/>
</dbReference>
<dbReference type="HAMAP" id="MF_00262">
    <property type="entry name" value="MinE"/>
    <property type="match status" value="1"/>
</dbReference>
<dbReference type="InterPro" id="IPR005527">
    <property type="entry name" value="MinE"/>
</dbReference>
<dbReference type="InterPro" id="IPR036707">
    <property type="entry name" value="MinE_sf"/>
</dbReference>
<dbReference type="NCBIfam" id="TIGR01215">
    <property type="entry name" value="minE"/>
    <property type="match status" value="1"/>
</dbReference>
<dbReference type="Pfam" id="PF03776">
    <property type="entry name" value="MinE"/>
    <property type="match status" value="1"/>
</dbReference>
<dbReference type="SUPFAM" id="SSF55229">
    <property type="entry name" value="Cell division protein MinE topological specificity domain"/>
    <property type="match status" value="1"/>
</dbReference>
<evidence type="ECO:0000255" key="1">
    <source>
        <dbReference type="HAMAP-Rule" id="MF_00262"/>
    </source>
</evidence>
<sequence>MFSWMKRGRSKETLKDRLELVLAYDRAQIPPGKVDALRNDLLEVVRRYFPTGNSSVEIEQRGDMVVLMANIPIDDTPPVRKSS</sequence>